<evidence type="ECO:0000255" key="1">
    <source>
        <dbReference type="HAMAP-Rule" id="MF_00014"/>
    </source>
</evidence>
<evidence type="ECO:0007829" key="2">
    <source>
        <dbReference type="PDB" id="2F1L"/>
    </source>
</evidence>
<feature type="chain" id="PRO_0000163335" description="Ribosome maturation factor RimM">
    <location>
        <begin position="1"/>
        <end position="175"/>
    </location>
</feature>
<feature type="domain" description="PRC barrel" evidence="1">
    <location>
        <begin position="98"/>
        <end position="175"/>
    </location>
</feature>
<feature type="strand" evidence="2">
    <location>
        <begin position="8"/>
        <end position="18"/>
    </location>
</feature>
<feature type="turn" evidence="2">
    <location>
        <begin position="19"/>
        <end position="22"/>
    </location>
</feature>
<feature type="strand" evidence="2">
    <location>
        <begin position="23"/>
        <end position="28"/>
    </location>
</feature>
<feature type="strand" evidence="2">
    <location>
        <begin position="30"/>
        <end position="32"/>
    </location>
</feature>
<feature type="helix" evidence="2">
    <location>
        <begin position="33"/>
        <end position="38"/>
    </location>
</feature>
<feature type="strand" evidence="2">
    <location>
        <begin position="41"/>
        <end position="46"/>
    </location>
</feature>
<feature type="strand" evidence="2">
    <location>
        <begin position="49"/>
        <end position="61"/>
    </location>
</feature>
<feature type="strand" evidence="2">
    <location>
        <begin position="64"/>
        <end position="69"/>
    </location>
</feature>
<feature type="helix" evidence="2">
    <location>
        <begin position="75"/>
        <end position="79"/>
    </location>
</feature>
<feature type="turn" evidence="2">
    <location>
        <begin position="80"/>
        <end position="83"/>
    </location>
</feature>
<feature type="strand" evidence="2">
    <location>
        <begin position="85"/>
        <end position="89"/>
    </location>
</feature>
<feature type="helix" evidence="2">
    <location>
        <begin position="90"/>
        <end position="92"/>
    </location>
</feature>
<feature type="helix" evidence="2">
    <location>
        <begin position="103"/>
        <end position="106"/>
    </location>
</feature>
<feature type="strand" evidence="2">
    <location>
        <begin position="110"/>
        <end position="113"/>
    </location>
</feature>
<feature type="strand" evidence="2">
    <location>
        <begin position="118"/>
        <end position="126"/>
    </location>
</feature>
<feature type="strand" evidence="2">
    <location>
        <begin position="129"/>
        <end position="131"/>
    </location>
</feature>
<feature type="strand" evidence="2">
    <location>
        <begin position="133"/>
        <end position="137"/>
    </location>
</feature>
<feature type="strand" evidence="2">
    <location>
        <begin position="142"/>
        <end position="145"/>
    </location>
</feature>
<feature type="strand" evidence="2">
    <location>
        <begin position="148"/>
        <end position="151"/>
    </location>
</feature>
<feature type="turn" evidence="2">
    <location>
        <begin position="154"/>
        <end position="156"/>
    </location>
</feature>
<feature type="strand" evidence="2">
    <location>
        <begin position="157"/>
        <end position="161"/>
    </location>
</feature>
<feature type="turn" evidence="2">
    <location>
        <begin position="162"/>
        <end position="165"/>
    </location>
</feature>
<feature type="strand" evidence="2">
    <location>
        <begin position="166"/>
        <end position="169"/>
    </location>
</feature>
<comment type="function">
    <text evidence="1">An accessory protein needed during the final step in the assembly of 30S ribosomal subunit, possibly for assembly of the head region. Essential for efficient processing of 16S rRNA. May be needed both before and after RbfA during the maturation of 16S rRNA. It has affinity for free ribosomal 30S subunits but not for 70S ribosomes.</text>
</comment>
<comment type="subunit">
    <text evidence="1">Binds ribosomal protein uS19.</text>
</comment>
<comment type="subcellular location">
    <subcellularLocation>
        <location evidence="1">Cytoplasm</location>
    </subcellularLocation>
</comment>
<comment type="domain">
    <text evidence="1">The PRC barrel domain binds ribosomal protein uS19.</text>
</comment>
<comment type="similarity">
    <text evidence="1">Belongs to the RimM family.</text>
</comment>
<accession>Q9HXQ0</accession>
<protein>
    <recommendedName>
        <fullName evidence="1">Ribosome maturation factor RimM</fullName>
    </recommendedName>
</protein>
<sequence>MPTPADDLVVIGKIVSVYGIRGEVKVYSFTDPLDNLLDYRRWTLRRDGEIRQAELVRGRLHGKVLAAKLKGLDDREEARTFTGYEICIPRSELPSLEEGEYYWHQLEGLKVIDQGRQLLGVIDHLLETGANDVMVVKPCAGSLDDRERLLPYTGQCVLSIDLAAGEMRVDWDADF</sequence>
<organism>
    <name type="scientific">Pseudomonas aeruginosa (strain ATCC 15692 / DSM 22644 / CIP 104116 / JCM 14847 / LMG 12228 / 1C / PRS 101 / PAO1)</name>
    <dbReference type="NCBI Taxonomy" id="208964"/>
    <lineage>
        <taxon>Bacteria</taxon>
        <taxon>Pseudomonadati</taxon>
        <taxon>Pseudomonadota</taxon>
        <taxon>Gammaproteobacteria</taxon>
        <taxon>Pseudomonadales</taxon>
        <taxon>Pseudomonadaceae</taxon>
        <taxon>Pseudomonas</taxon>
    </lineage>
</organism>
<dbReference type="EMBL" id="AE004091">
    <property type="protein sequence ID" value="AAG07131.1"/>
    <property type="molecule type" value="Genomic_DNA"/>
</dbReference>
<dbReference type="PIR" id="D83178">
    <property type="entry name" value="D83178"/>
</dbReference>
<dbReference type="RefSeq" id="NP_252433.1">
    <property type="nucleotide sequence ID" value="NC_002516.2"/>
</dbReference>
<dbReference type="RefSeq" id="WP_003113830.1">
    <property type="nucleotide sequence ID" value="NZ_QZGE01000001.1"/>
</dbReference>
<dbReference type="PDB" id="2F1L">
    <property type="method" value="X-ray"/>
    <property type="resolution" value="2.46 A"/>
    <property type="chains" value="A=1-175"/>
</dbReference>
<dbReference type="PDBsum" id="2F1L"/>
<dbReference type="SMR" id="Q9HXQ0"/>
<dbReference type="FunCoup" id="Q9HXQ0">
    <property type="interactions" value="512"/>
</dbReference>
<dbReference type="STRING" id="208964.PA3744"/>
<dbReference type="PaxDb" id="208964-PA3744"/>
<dbReference type="DNASU" id="880358"/>
<dbReference type="GeneID" id="880358"/>
<dbReference type="KEGG" id="pae:PA3744"/>
<dbReference type="PATRIC" id="fig|208964.12.peg.3916"/>
<dbReference type="PseudoCAP" id="PA3744"/>
<dbReference type="HOGENOM" id="CLU_077636_1_0_6"/>
<dbReference type="InParanoid" id="Q9HXQ0"/>
<dbReference type="OrthoDB" id="9783509at2"/>
<dbReference type="PhylomeDB" id="Q9HXQ0"/>
<dbReference type="BioCyc" id="PAER208964:G1FZ6-3815-MONOMER"/>
<dbReference type="EvolutionaryTrace" id="Q9HXQ0"/>
<dbReference type="Proteomes" id="UP000002438">
    <property type="component" value="Chromosome"/>
</dbReference>
<dbReference type="GO" id="GO:0005829">
    <property type="term" value="C:cytosol"/>
    <property type="evidence" value="ECO:0000318"/>
    <property type="project" value="GO_Central"/>
</dbReference>
<dbReference type="GO" id="GO:0005840">
    <property type="term" value="C:ribosome"/>
    <property type="evidence" value="ECO:0007669"/>
    <property type="project" value="InterPro"/>
</dbReference>
<dbReference type="GO" id="GO:0043022">
    <property type="term" value="F:ribosome binding"/>
    <property type="evidence" value="ECO:0007669"/>
    <property type="project" value="InterPro"/>
</dbReference>
<dbReference type="GO" id="GO:0030490">
    <property type="term" value="P:maturation of SSU-rRNA"/>
    <property type="evidence" value="ECO:0000318"/>
    <property type="project" value="GO_Central"/>
</dbReference>
<dbReference type="Gene3D" id="2.30.30.240">
    <property type="entry name" value="PRC-barrel domain"/>
    <property type="match status" value="1"/>
</dbReference>
<dbReference type="Gene3D" id="2.40.30.60">
    <property type="entry name" value="RimM"/>
    <property type="match status" value="1"/>
</dbReference>
<dbReference type="HAMAP" id="MF_00014">
    <property type="entry name" value="Ribosome_mat_RimM"/>
    <property type="match status" value="1"/>
</dbReference>
<dbReference type="InterPro" id="IPR011033">
    <property type="entry name" value="PRC_barrel-like_sf"/>
</dbReference>
<dbReference type="InterPro" id="IPR056792">
    <property type="entry name" value="PRC_RimM"/>
</dbReference>
<dbReference type="InterPro" id="IPR011961">
    <property type="entry name" value="RimM"/>
</dbReference>
<dbReference type="InterPro" id="IPR002676">
    <property type="entry name" value="RimM_N"/>
</dbReference>
<dbReference type="InterPro" id="IPR036976">
    <property type="entry name" value="RimM_N_sf"/>
</dbReference>
<dbReference type="InterPro" id="IPR009000">
    <property type="entry name" value="Transl_B-barrel_sf"/>
</dbReference>
<dbReference type="NCBIfam" id="TIGR02273">
    <property type="entry name" value="16S_RimM"/>
    <property type="match status" value="1"/>
</dbReference>
<dbReference type="PANTHER" id="PTHR33692">
    <property type="entry name" value="RIBOSOME MATURATION FACTOR RIMM"/>
    <property type="match status" value="1"/>
</dbReference>
<dbReference type="PANTHER" id="PTHR33692:SF1">
    <property type="entry name" value="RIBOSOME MATURATION FACTOR RIMM"/>
    <property type="match status" value="1"/>
</dbReference>
<dbReference type="Pfam" id="PF24986">
    <property type="entry name" value="PRC_RimM"/>
    <property type="match status" value="1"/>
</dbReference>
<dbReference type="Pfam" id="PF01782">
    <property type="entry name" value="RimM"/>
    <property type="match status" value="1"/>
</dbReference>
<dbReference type="SUPFAM" id="SSF50346">
    <property type="entry name" value="PRC-barrel domain"/>
    <property type="match status" value="1"/>
</dbReference>
<dbReference type="SUPFAM" id="SSF50447">
    <property type="entry name" value="Translation proteins"/>
    <property type="match status" value="1"/>
</dbReference>
<reference key="1">
    <citation type="journal article" date="2000" name="Nature">
        <title>Complete genome sequence of Pseudomonas aeruginosa PAO1, an opportunistic pathogen.</title>
        <authorList>
            <person name="Stover C.K."/>
            <person name="Pham X.-Q.T."/>
            <person name="Erwin A.L."/>
            <person name="Mizoguchi S.D."/>
            <person name="Warrener P."/>
            <person name="Hickey M.J."/>
            <person name="Brinkman F.S.L."/>
            <person name="Hufnagle W.O."/>
            <person name="Kowalik D.J."/>
            <person name="Lagrou M."/>
            <person name="Garber R.L."/>
            <person name="Goltry L."/>
            <person name="Tolentino E."/>
            <person name="Westbrock-Wadman S."/>
            <person name="Yuan Y."/>
            <person name="Brody L.L."/>
            <person name="Coulter S.N."/>
            <person name="Folger K.R."/>
            <person name="Kas A."/>
            <person name="Larbig K."/>
            <person name="Lim R.M."/>
            <person name="Smith K.A."/>
            <person name="Spencer D.H."/>
            <person name="Wong G.K.-S."/>
            <person name="Wu Z."/>
            <person name="Paulsen I.T."/>
            <person name="Reizer J."/>
            <person name="Saier M.H. Jr."/>
            <person name="Hancock R.E.W."/>
            <person name="Lory S."/>
            <person name="Olson M.V."/>
        </authorList>
    </citation>
    <scope>NUCLEOTIDE SEQUENCE [LARGE SCALE GENOMIC DNA]</scope>
    <source>
        <strain>ATCC 15692 / DSM 22644 / CIP 104116 / JCM 14847 / LMG 12228 / 1C / PRS 101 / PAO1</strain>
    </source>
</reference>
<reference key="2">
    <citation type="submission" date="2006-02" db="PDB data bank">
        <title>Crystal structure of 16s rRNA processing protein from Pseudomonas aeruginosa at 2.46 A resolution.</title>
        <authorList>
            <consortium name="Joint center for structural genomics (JCSG)"/>
        </authorList>
    </citation>
    <scope>X-RAY CRYSTALLOGRAPHY (2.46 ANGSTROMS)</scope>
</reference>
<name>RIMM_PSEAE</name>
<keyword id="KW-0002">3D-structure</keyword>
<keyword id="KW-0143">Chaperone</keyword>
<keyword id="KW-0963">Cytoplasm</keyword>
<keyword id="KW-1185">Reference proteome</keyword>
<keyword id="KW-0690">Ribosome biogenesis</keyword>
<keyword id="KW-0698">rRNA processing</keyword>
<proteinExistence type="evidence at protein level"/>
<gene>
    <name evidence="1" type="primary">rimM</name>
    <name type="ordered locus">PA3744</name>
</gene>